<reference key="1">
    <citation type="submission" date="2004-05" db="EMBL/GenBank/DDBJ databases">
        <authorList>
            <consortium name="NIH - Xenopus Gene Collection (XGC) project"/>
        </authorList>
    </citation>
    <scope>NUCLEOTIDE SEQUENCE [LARGE SCALE MRNA]</scope>
    <source>
        <tissue>Oocyte</tissue>
    </source>
</reference>
<dbReference type="EMBL" id="BC070827">
    <property type="protein sequence ID" value="AAH70827.1"/>
    <property type="molecule type" value="mRNA"/>
</dbReference>
<dbReference type="RefSeq" id="NP_001084885.1">
    <property type="nucleotide sequence ID" value="NM_001091416.1"/>
</dbReference>
<dbReference type="SMR" id="Q6NRC9"/>
<dbReference type="DNASU" id="431936"/>
<dbReference type="GeneID" id="431936"/>
<dbReference type="KEGG" id="xla:431936"/>
<dbReference type="AGR" id="Xenbase:XB-GENE-992691"/>
<dbReference type="CTD" id="431936"/>
<dbReference type="Xenbase" id="XB-GENE-992691">
    <property type="gene designation" value="lrrcc1.L"/>
</dbReference>
<dbReference type="OrthoDB" id="7451790at2759"/>
<dbReference type="Proteomes" id="UP000186698">
    <property type="component" value="Chromosome 6L"/>
</dbReference>
<dbReference type="Bgee" id="431936">
    <property type="expression patterns" value="Expressed in egg cell and 16 other cell types or tissues"/>
</dbReference>
<dbReference type="GO" id="GO:0005814">
    <property type="term" value="C:centriole"/>
    <property type="evidence" value="ECO:0007669"/>
    <property type="project" value="UniProtKB-SubCell"/>
</dbReference>
<dbReference type="GO" id="GO:0005813">
    <property type="term" value="C:centrosome"/>
    <property type="evidence" value="ECO:0000318"/>
    <property type="project" value="GO_Central"/>
</dbReference>
<dbReference type="GO" id="GO:0005737">
    <property type="term" value="C:cytoplasm"/>
    <property type="evidence" value="ECO:0000318"/>
    <property type="project" value="GO_Central"/>
</dbReference>
<dbReference type="GO" id="GO:0051301">
    <property type="term" value="P:cell division"/>
    <property type="evidence" value="ECO:0007669"/>
    <property type="project" value="UniProtKB-KW"/>
</dbReference>
<dbReference type="FunFam" id="3.80.10.10:FF:000148">
    <property type="entry name" value="Leucine rich repeat and coiled-coil centrosomal protein 1"/>
    <property type="match status" value="1"/>
</dbReference>
<dbReference type="Gene3D" id="3.80.10.10">
    <property type="entry name" value="Ribonuclease Inhibitor"/>
    <property type="match status" value="2"/>
</dbReference>
<dbReference type="InterPro" id="IPR001611">
    <property type="entry name" value="Leu-rich_rpt"/>
</dbReference>
<dbReference type="InterPro" id="IPR025875">
    <property type="entry name" value="Leu-rich_rpt_4"/>
</dbReference>
<dbReference type="InterPro" id="IPR003591">
    <property type="entry name" value="Leu-rich_rpt_typical-subtyp"/>
</dbReference>
<dbReference type="InterPro" id="IPR032675">
    <property type="entry name" value="LRR_dom_sf"/>
</dbReference>
<dbReference type="PANTHER" id="PTHR15454:SF34">
    <property type="entry name" value="LEUCINE-RICH REPEAT AND COILED-COIL DOMAIN-CONTAINING PROTEIN 1"/>
    <property type="match status" value="1"/>
</dbReference>
<dbReference type="PANTHER" id="PTHR15454">
    <property type="entry name" value="NISCHARIN RELATED"/>
    <property type="match status" value="1"/>
</dbReference>
<dbReference type="Pfam" id="PF12799">
    <property type="entry name" value="LRR_4"/>
    <property type="match status" value="1"/>
</dbReference>
<dbReference type="SMART" id="SM00365">
    <property type="entry name" value="LRR_SD22"/>
    <property type="match status" value="4"/>
</dbReference>
<dbReference type="SMART" id="SM00369">
    <property type="entry name" value="LRR_TYP"/>
    <property type="match status" value="4"/>
</dbReference>
<dbReference type="SUPFAM" id="SSF52058">
    <property type="entry name" value="L domain-like"/>
    <property type="match status" value="1"/>
</dbReference>
<dbReference type="PROSITE" id="PS51450">
    <property type="entry name" value="LRR"/>
    <property type="match status" value="5"/>
</dbReference>
<protein>
    <recommendedName>
        <fullName>Leucine-rich repeat and coiled-coil domain-containing protein 1</fullName>
    </recommendedName>
</protein>
<name>LRCC1_XENLA</name>
<feature type="chain" id="PRO_0000337083" description="Leucine-rich repeat and coiled-coil domain-containing protein 1">
    <location>
        <begin position="1"/>
        <end position="1030"/>
    </location>
</feature>
<feature type="repeat" description="LRR 1">
    <location>
        <begin position="7"/>
        <end position="28"/>
    </location>
</feature>
<feature type="repeat" description="LRR 2">
    <location>
        <begin position="29"/>
        <end position="50"/>
    </location>
</feature>
<feature type="repeat" description="LRR 3">
    <location>
        <begin position="51"/>
        <end position="72"/>
    </location>
</feature>
<feature type="repeat" description="LRR 4">
    <location>
        <begin position="73"/>
        <end position="94"/>
    </location>
</feature>
<feature type="repeat" description="LRR 5">
    <location>
        <begin position="95"/>
        <end position="116"/>
    </location>
</feature>
<feature type="repeat" description="LRR 6">
    <location>
        <begin position="121"/>
        <end position="142"/>
    </location>
</feature>
<feature type="domain" description="LRRCT">
    <location>
        <begin position="160"/>
        <end position="200"/>
    </location>
</feature>
<feature type="region of interest" description="Disordered" evidence="3">
    <location>
        <begin position="298"/>
        <end position="401"/>
    </location>
</feature>
<feature type="coiled-coil region" evidence="2">
    <location>
        <begin position="432"/>
        <end position="645"/>
    </location>
</feature>
<feature type="compositionally biased region" description="Basic and acidic residues" evidence="3">
    <location>
        <begin position="300"/>
        <end position="311"/>
    </location>
</feature>
<feature type="compositionally biased region" description="Polar residues" evidence="3">
    <location>
        <begin position="338"/>
        <end position="368"/>
    </location>
</feature>
<feature type="compositionally biased region" description="Polar residues" evidence="3">
    <location>
        <begin position="378"/>
        <end position="393"/>
    </location>
</feature>
<gene>
    <name type="primary">lrrcc1</name>
</gene>
<evidence type="ECO:0000250" key="1"/>
<evidence type="ECO:0000255" key="2"/>
<evidence type="ECO:0000256" key="3">
    <source>
        <dbReference type="SAM" id="MobiDB-lite"/>
    </source>
</evidence>
<evidence type="ECO:0000305" key="4"/>
<comment type="function">
    <text evidence="1">Required for the organization of the mitotic spindle. Maintains the structural integrity of centrosomes during mitosis (By similarity).</text>
</comment>
<comment type="subcellular location">
    <subcellularLocation>
        <location evidence="1">Cytoplasm</location>
        <location evidence="1">Cytoskeleton</location>
        <location evidence="1">Microtubule organizing center</location>
        <location evidence="1">Centrosome</location>
        <location evidence="1">Centriole</location>
    </subcellularLocation>
</comment>
<comment type="similarity">
    <text evidence="4">Belongs to the LRRCC1 family.</text>
</comment>
<organism>
    <name type="scientific">Xenopus laevis</name>
    <name type="common">African clawed frog</name>
    <dbReference type="NCBI Taxonomy" id="8355"/>
    <lineage>
        <taxon>Eukaryota</taxon>
        <taxon>Metazoa</taxon>
        <taxon>Chordata</taxon>
        <taxon>Craniata</taxon>
        <taxon>Vertebrata</taxon>
        <taxon>Euteleostomi</taxon>
        <taxon>Amphibia</taxon>
        <taxon>Batrachia</taxon>
        <taxon>Anura</taxon>
        <taxon>Pipoidea</taxon>
        <taxon>Pipidae</taxon>
        <taxon>Xenopodinae</taxon>
        <taxon>Xenopus</taxon>
        <taxon>Xenopus</taxon>
    </lineage>
</organism>
<keyword id="KW-0131">Cell cycle</keyword>
<keyword id="KW-0132">Cell division</keyword>
<keyword id="KW-0175">Coiled coil</keyword>
<keyword id="KW-0963">Cytoplasm</keyword>
<keyword id="KW-0206">Cytoskeleton</keyword>
<keyword id="KW-0433">Leucine-rich repeat</keyword>
<keyword id="KW-0498">Mitosis</keyword>
<keyword id="KW-1185">Reference proteome</keyword>
<keyword id="KW-0677">Repeat</keyword>
<sequence length="1030" mass="118742">MAGTDPRNRELSLMDKQISSLLEICLNSNLYSINLHCNQISKIEGLRHLCYLQHLDLSSNLITKIEGLDSLASLQSLNLSCNKLTRVEGLEKLFNLKKLNLSYNSIQDLTGLIPLHGWNHKLSHLYLHSNCINSIDEVLQSTVGLNCLLHLTLEQNAKGNPVCHALGYREIILENLPQLNSLDGLDRSGDPVTAHEVDSMDLANLDFLEYLITFDSGRKEVKESLTGPVKTARIDEVLTKYRKHRDSSEAINLNTDGTSSSEHDVVRFQDNSNMLREMRIKKLEDQISELLVKASCPKSEQTKLKAKRDTDITTESDSESTKENRKGSTTKRTPGCHKTSQTSKQQANQQLKGRTSYSELKQNVSRKQSLSKRKTDIETSLSSGRTDTDSTGQILGKPHAIGGSLKKKGELVRNSIEESTYRALVQELDQERERRWKAEQVVLKLTENIKELQSQAKEEKGINSMAVYTTDRIKELLLKEKNAKSKLQELIHHLREENEKLMDELKKLKCKEEDYQKAYKSMEDTLAKLETQNIQKQALEMKQVQETERKVSASQREIDLLRVALRQQKEKVNQLHEVLTSKEQLHRKELESRVALNGPEFQYALAQEMAKEEHHHSQQIHSFQEKINLLTQQYADLEDEFRAALIIEAERFKEVKDGFDNVASELAEHKETVHRCRQKEKQSATLMQELTTMVKEQKARIAEITKAKQEIISDLKSKIHSLEKVAEEGRQKTVQTELLKKEKSKLISQLTAQESLIDGLKAERKIWGQELTQQGVSLAQDRGRLEAKIEVLSNEIESLKKQNERDADALRIKTKIVDDQTETIRKLKEGLQERDERIRKLREENIELEKVLQEQSDERTAQLEELKQKLERQTERKEEVKQLLEEKEAELEDVKKAYSAMNKKWQDKAELLSHLETQVRQMKENFDAKENKLIEERDKSLQCQKVITEKLRSVDDAFRRQLESVLSAHQAELIKLASDKQKEIEAANERVYQVEEEMRHLLKETANSKKIMEEKIKRLTGALSDIQKEF</sequence>
<proteinExistence type="evidence at transcript level"/>
<accession>Q6NRC9</accession>